<reference key="1">
    <citation type="journal article" date="2011" name="Stand. Genomic Sci.">
        <title>Complete genome sequence of 'Thioalkalivibrio sulfidophilus' HL-EbGr7.</title>
        <authorList>
            <person name="Muyzer G."/>
            <person name="Sorokin D.Y."/>
            <person name="Mavromatis K."/>
            <person name="Lapidus A."/>
            <person name="Clum A."/>
            <person name="Ivanova N."/>
            <person name="Pati A."/>
            <person name="d'Haeseleer P."/>
            <person name="Woyke T."/>
            <person name="Kyrpides N.C."/>
        </authorList>
    </citation>
    <scope>NUCLEOTIDE SEQUENCE [LARGE SCALE GENOMIC DNA]</scope>
    <source>
        <strain>HL-EbGR7</strain>
    </source>
</reference>
<accession>B8GNC6</accession>
<organism>
    <name type="scientific">Thioalkalivibrio sulfidiphilus (strain HL-EbGR7)</name>
    <dbReference type="NCBI Taxonomy" id="396588"/>
    <lineage>
        <taxon>Bacteria</taxon>
        <taxon>Pseudomonadati</taxon>
        <taxon>Pseudomonadota</taxon>
        <taxon>Gammaproteobacteria</taxon>
        <taxon>Chromatiales</taxon>
        <taxon>Ectothiorhodospiraceae</taxon>
        <taxon>Thioalkalivibrio</taxon>
    </lineage>
</organism>
<proteinExistence type="inferred from homology"/>
<comment type="function">
    <text evidence="1">Catalyzes the transfer of a dimethylallyl group onto the adenine at position 37 in tRNAs that read codons beginning with uridine, leading to the formation of N6-(dimethylallyl)adenosine (i(6)A).</text>
</comment>
<comment type="catalytic activity">
    <reaction evidence="1">
        <text>adenosine(37) in tRNA + dimethylallyl diphosphate = N(6)-dimethylallyladenosine(37) in tRNA + diphosphate</text>
        <dbReference type="Rhea" id="RHEA:26482"/>
        <dbReference type="Rhea" id="RHEA-COMP:10162"/>
        <dbReference type="Rhea" id="RHEA-COMP:10375"/>
        <dbReference type="ChEBI" id="CHEBI:33019"/>
        <dbReference type="ChEBI" id="CHEBI:57623"/>
        <dbReference type="ChEBI" id="CHEBI:74411"/>
        <dbReference type="ChEBI" id="CHEBI:74415"/>
        <dbReference type="EC" id="2.5.1.75"/>
    </reaction>
</comment>
<comment type="cofactor">
    <cofactor evidence="1">
        <name>Mg(2+)</name>
        <dbReference type="ChEBI" id="CHEBI:18420"/>
    </cofactor>
</comment>
<comment type="subunit">
    <text evidence="1">Monomer.</text>
</comment>
<comment type="similarity">
    <text evidence="1">Belongs to the IPP transferase family.</text>
</comment>
<evidence type="ECO:0000255" key="1">
    <source>
        <dbReference type="HAMAP-Rule" id="MF_00185"/>
    </source>
</evidence>
<sequence length="320" mass="34930">MPQPMSPPAIFLMGPTASGKTDLAVELVRRLPCEIISVDSALVYRGMDIGTAKPGPEILAEAPHRLIDILDPAEAYSAARFREDALAAMAEIAAAGRVPLLVGGTMLYFRALEFGLDRLPEADPEVRAQIEAEAAASGWEAIHARLAAVDPPSAARIHPNDPQRLQRALEVYLLTGRPLSAFHGGADASTLPYRLLRLALIPADRAALRERIARRFDQMLELGLIHEVETLYRREDLNPSLPAIRAVGYRQAWAYLAGEMDFETMRSKAIIATGQLAKRQLTWLRSYPGIEVLEMEQLDPAAVVARVRAHLEAARAGAGP</sequence>
<feature type="chain" id="PRO_0000377357" description="tRNA dimethylallyltransferase">
    <location>
        <begin position="1"/>
        <end position="320"/>
    </location>
</feature>
<feature type="region of interest" description="Interaction with substrate tRNA" evidence="1">
    <location>
        <begin position="39"/>
        <end position="42"/>
    </location>
</feature>
<feature type="region of interest" description="Interaction with substrate tRNA" evidence="1">
    <location>
        <begin position="163"/>
        <end position="167"/>
    </location>
</feature>
<feature type="binding site" evidence="1">
    <location>
        <begin position="14"/>
        <end position="21"/>
    </location>
    <ligand>
        <name>ATP</name>
        <dbReference type="ChEBI" id="CHEBI:30616"/>
    </ligand>
</feature>
<feature type="binding site" evidence="1">
    <location>
        <begin position="16"/>
        <end position="21"/>
    </location>
    <ligand>
        <name>substrate</name>
    </ligand>
</feature>
<feature type="site" description="Interaction with substrate tRNA" evidence="1">
    <location>
        <position position="105"/>
    </location>
</feature>
<feature type="site" description="Interaction with substrate tRNA" evidence="1">
    <location>
        <position position="127"/>
    </location>
</feature>
<name>MIAA_THISH</name>
<gene>
    <name evidence="1" type="primary">miaA</name>
    <name type="ordered locus">Tgr7_0896</name>
</gene>
<dbReference type="EC" id="2.5.1.75" evidence="1"/>
<dbReference type="EMBL" id="CP001339">
    <property type="protein sequence ID" value="ACL71987.1"/>
    <property type="molecule type" value="Genomic_DNA"/>
</dbReference>
<dbReference type="SMR" id="B8GNC6"/>
<dbReference type="STRING" id="396588.Tgr7_0896"/>
<dbReference type="KEGG" id="tgr:Tgr7_0896"/>
<dbReference type="eggNOG" id="COG0324">
    <property type="taxonomic scope" value="Bacteria"/>
</dbReference>
<dbReference type="HOGENOM" id="CLU_032616_0_0_6"/>
<dbReference type="OrthoDB" id="9776390at2"/>
<dbReference type="Proteomes" id="UP000002383">
    <property type="component" value="Chromosome"/>
</dbReference>
<dbReference type="GO" id="GO:0005524">
    <property type="term" value="F:ATP binding"/>
    <property type="evidence" value="ECO:0007669"/>
    <property type="project" value="UniProtKB-UniRule"/>
</dbReference>
<dbReference type="GO" id="GO:0052381">
    <property type="term" value="F:tRNA dimethylallyltransferase activity"/>
    <property type="evidence" value="ECO:0007669"/>
    <property type="project" value="UniProtKB-UniRule"/>
</dbReference>
<dbReference type="GO" id="GO:0006400">
    <property type="term" value="P:tRNA modification"/>
    <property type="evidence" value="ECO:0007669"/>
    <property type="project" value="TreeGrafter"/>
</dbReference>
<dbReference type="FunFam" id="1.10.20.140:FF:000001">
    <property type="entry name" value="tRNA dimethylallyltransferase"/>
    <property type="match status" value="1"/>
</dbReference>
<dbReference type="Gene3D" id="1.10.20.140">
    <property type="match status" value="1"/>
</dbReference>
<dbReference type="Gene3D" id="3.40.50.300">
    <property type="entry name" value="P-loop containing nucleotide triphosphate hydrolases"/>
    <property type="match status" value="1"/>
</dbReference>
<dbReference type="HAMAP" id="MF_00185">
    <property type="entry name" value="IPP_trans"/>
    <property type="match status" value="1"/>
</dbReference>
<dbReference type="InterPro" id="IPR039657">
    <property type="entry name" value="Dimethylallyltransferase"/>
</dbReference>
<dbReference type="InterPro" id="IPR018022">
    <property type="entry name" value="IPT"/>
</dbReference>
<dbReference type="InterPro" id="IPR027417">
    <property type="entry name" value="P-loop_NTPase"/>
</dbReference>
<dbReference type="NCBIfam" id="TIGR00174">
    <property type="entry name" value="miaA"/>
    <property type="match status" value="1"/>
</dbReference>
<dbReference type="PANTHER" id="PTHR11088">
    <property type="entry name" value="TRNA DIMETHYLALLYLTRANSFERASE"/>
    <property type="match status" value="1"/>
</dbReference>
<dbReference type="PANTHER" id="PTHR11088:SF60">
    <property type="entry name" value="TRNA DIMETHYLALLYLTRANSFERASE"/>
    <property type="match status" value="1"/>
</dbReference>
<dbReference type="Pfam" id="PF01715">
    <property type="entry name" value="IPPT"/>
    <property type="match status" value="1"/>
</dbReference>
<dbReference type="SUPFAM" id="SSF52540">
    <property type="entry name" value="P-loop containing nucleoside triphosphate hydrolases"/>
    <property type="match status" value="1"/>
</dbReference>
<protein>
    <recommendedName>
        <fullName evidence="1">tRNA dimethylallyltransferase</fullName>
        <ecNumber evidence="1">2.5.1.75</ecNumber>
    </recommendedName>
    <alternativeName>
        <fullName evidence="1">Dimethylallyl diphosphate:tRNA dimethylallyltransferase</fullName>
        <shortName evidence="1">DMAPP:tRNA dimethylallyltransferase</shortName>
        <shortName evidence="1">DMATase</shortName>
    </alternativeName>
    <alternativeName>
        <fullName evidence="1">Isopentenyl-diphosphate:tRNA isopentenyltransferase</fullName>
        <shortName evidence="1">IPP transferase</shortName>
        <shortName evidence="1">IPPT</shortName>
        <shortName evidence="1">IPTase</shortName>
    </alternativeName>
</protein>
<keyword id="KW-0067">ATP-binding</keyword>
<keyword id="KW-0460">Magnesium</keyword>
<keyword id="KW-0547">Nucleotide-binding</keyword>
<keyword id="KW-1185">Reference proteome</keyword>
<keyword id="KW-0808">Transferase</keyword>
<keyword id="KW-0819">tRNA processing</keyword>